<dbReference type="EMBL" id="CU468135">
    <property type="protein sequence ID" value="CAO96635.1"/>
    <property type="molecule type" value="Genomic_DNA"/>
</dbReference>
<dbReference type="RefSeq" id="WP_012441328.1">
    <property type="nucleotide sequence ID" value="NC_010694.1"/>
</dbReference>
<dbReference type="SMR" id="B2VKV3"/>
<dbReference type="STRING" id="465817.ETA_15890"/>
<dbReference type="KEGG" id="eta:ETA_15890"/>
<dbReference type="eggNOG" id="COG3099">
    <property type="taxonomic scope" value="Bacteria"/>
</dbReference>
<dbReference type="HOGENOM" id="CLU_143392_0_0_6"/>
<dbReference type="OrthoDB" id="5677388at2"/>
<dbReference type="Proteomes" id="UP000001726">
    <property type="component" value="Chromosome"/>
</dbReference>
<dbReference type="Gene3D" id="3.10.450.140">
    <property type="entry name" value="dsDNA mimic, putative"/>
    <property type="match status" value="1"/>
</dbReference>
<dbReference type="HAMAP" id="MF_00680">
    <property type="entry name" value="Put_dsDNA_mimic"/>
    <property type="match status" value="1"/>
</dbReference>
<dbReference type="InterPro" id="IPR007376">
    <property type="entry name" value="dsDNA_mimic_put"/>
</dbReference>
<dbReference type="InterPro" id="IPR036763">
    <property type="entry name" value="Put_dsDNA_mimic_sf"/>
</dbReference>
<dbReference type="NCBIfam" id="NF003469">
    <property type="entry name" value="PRK05094.1"/>
    <property type="match status" value="1"/>
</dbReference>
<dbReference type="Pfam" id="PF04269">
    <property type="entry name" value="DUF440"/>
    <property type="match status" value="1"/>
</dbReference>
<dbReference type="PIRSF" id="PIRSF004916">
    <property type="entry name" value="UCP004916"/>
    <property type="match status" value="1"/>
</dbReference>
<dbReference type="SUPFAM" id="SSF102816">
    <property type="entry name" value="Putative dsDNA mimic"/>
    <property type="match status" value="1"/>
</dbReference>
<organism>
    <name type="scientific">Erwinia tasmaniensis (strain DSM 17950 / CFBP 7177 / CIP 109463 / NCPPB 4357 / Et1/99)</name>
    <dbReference type="NCBI Taxonomy" id="465817"/>
    <lineage>
        <taxon>Bacteria</taxon>
        <taxon>Pseudomonadati</taxon>
        <taxon>Pseudomonadota</taxon>
        <taxon>Gammaproteobacteria</taxon>
        <taxon>Enterobacterales</taxon>
        <taxon>Erwiniaceae</taxon>
        <taxon>Erwinia</taxon>
    </lineage>
</organism>
<keyword id="KW-1185">Reference proteome</keyword>
<name>Y1589_ERWT9</name>
<feature type="chain" id="PRO_1000131708" description="Putative double-stranded DNA mimic protein ETA_15890">
    <location>
        <begin position="1"/>
        <end position="107"/>
    </location>
</feature>
<sequence length="107" mass="12299">MDLNNRLSEDETLEQAYDIFLELAVDNLDPADVILFNLQFEERGGAELHDPAEDWAEHVDFDLNPDFFAEVLIGLGEADGEPITDVFARVLICREKDHKLCHILWKE</sequence>
<protein>
    <recommendedName>
        <fullName evidence="1">Putative double-stranded DNA mimic protein ETA_15890</fullName>
    </recommendedName>
</protein>
<accession>B2VKV3</accession>
<proteinExistence type="inferred from homology"/>
<reference key="1">
    <citation type="journal article" date="2008" name="Environ. Microbiol.">
        <title>The genome of Erwinia tasmaniensis strain Et1/99, a non-pathogenic bacterium in the genus Erwinia.</title>
        <authorList>
            <person name="Kube M."/>
            <person name="Migdoll A.M."/>
            <person name="Mueller I."/>
            <person name="Kuhl H."/>
            <person name="Beck A."/>
            <person name="Reinhardt R."/>
            <person name="Geider K."/>
        </authorList>
    </citation>
    <scope>NUCLEOTIDE SEQUENCE [LARGE SCALE GENOMIC DNA]</scope>
    <source>
        <strain>DSM 17950 / CFBP 7177 / CIP 109463 / NCPPB 4357 / Et1/99</strain>
    </source>
</reference>
<gene>
    <name type="ordered locus">ETA_15890</name>
</gene>
<evidence type="ECO:0000255" key="1">
    <source>
        <dbReference type="HAMAP-Rule" id="MF_00680"/>
    </source>
</evidence>
<comment type="function">
    <text evidence="1">May act as a double-stranded DNA (dsDNA) mimic. Probably regulates the activity of a dsDNA-binding protein.</text>
</comment>
<comment type="similarity">
    <text evidence="1">Belongs to the putative dsDNA mimic protein family.</text>
</comment>